<organism>
    <name type="scientific">Rattus norvegicus</name>
    <name type="common">Rat</name>
    <dbReference type="NCBI Taxonomy" id="10116"/>
    <lineage>
        <taxon>Eukaryota</taxon>
        <taxon>Metazoa</taxon>
        <taxon>Chordata</taxon>
        <taxon>Craniata</taxon>
        <taxon>Vertebrata</taxon>
        <taxon>Euteleostomi</taxon>
        <taxon>Mammalia</taxon>
        <taxon>Eutheria</taxon>
        <taxon>Euarchontoglires</taxon>
        <taxon>Glires</taxon>
        <taxon>Rodentia</taxon>
        <taxon>Myomorpha</taxon>
        <taxon>Muroidea</taxon>
        <taxon>Muridae</taxon>
        <taxon>Murinae</taxon>
        <taxon>Rattus</taxon>
    </lineage>
</organism>
<accession>Q6AZ51</accession>
<accession>Q6P7B8</accession>
<comment type="function">
    <text evidence="1">Specific functional receptor for IL17C, signaling through the NF-kappa-B and MAPK pathways. Requires TRAF3IP2 /ACT1 for signaling. Crucial regulator in innate immunity to bacterial pathogens (By similarity).</text>
</comment>
<comment type="subunit">
    <text evidence="1">Forms heterodimers with IL17RE; the heterodimer binds IL17C.</text>
</comment>
<comment type="subcellular location">
    <subcellularLocation>
        <location evidence="1">Cell membrane</location>
        <topology evidence="1">Single-pass type I membrane protein</topology>
    </subcellularLocation>
</comment>
<reference key="1">
    <citation type="journal article" date="2004" name="Genome Res.">
        <title>The status, quality, and expansion of the NIH full-length cDNA project: the Mammalian Gene Collection (MGC).</title>
        <authorList>
            <consortium name="The MGC Project Team"/>
        </authorList>
    </citation>
    <scope>NUCLEOTIDE SEQUENCE [LARGE SCALE MRNA]</scope>
    <source>
        <tissue>Lung</tissue>
        <tissue>Prostate</tissue>
    </source>
</reference>
<keyword id="KW-1003">Cell membrane</keyword>
<keyword id="KW-0325">Glycoprotein</keyword>
<keyword id="KW-0395">Inflammatory response</keyword>
<keyword id="KW-0472">Membrane</keyword>
<keyword id="KW-0675">Receptor</keyword>
<keyword id="KW-1185">Reference proteome</keyword>
<keyword id="KW-0732">Signal</keyword>
<keyword id="KW-0812">Transmembrane</keyword>
<keyword id="KW-1133">Transmembrane helix</keyword>
<feature type="signal peptide" evidence="2">
    <location>
        <begin position="1"/>
        <end position="24"/>
    </location>
</feature>
<feature type="chain" id="PRO_0000309469" description="Interleukin-17 receptor E">
    <location>
        <begin position="25"/>
        <end position="637"/>
    </location>
</feature>
<feature type="topological domain" description="Extracellular" evidence="2">
    <location>
        <begin position="25"/>
        <end position="415"/>
    </location>
</feature>
<feature type="transmembrane region" description="Helical" evidence="2">
    <location>
        <begin position="416"/>
        <end position="436"/>
    </location>
</feature>
<feature type="topological domain" description="Cytoplasmic" evidence="2">
    <location>
        <begin position="437"/>
        <end position="637"/>
    </location>
</feature>
<feature type="domain" description="SEFIR" evidence="3">
    <location>
        <begin position="447"/>
        <end position="583"/>
    </location>
</feature>
<feature type="glycosylation site" description="N-linked (GlcNAc...) asparagine" evidence="2">
    <location>
        <position position="278"/>
    </location>
</feature>
<feature type="glycosylation site" description="N-linked (GlcNAc...) asparagine" evidence="2">
    <location>
        <position position="307"/>
    </location>
</feature>
<evidence type="ECO:0000250" key="1"/>
<evidence type="ECO:0000255" key="2"/>
<evidence type="ECO:0000255" key="3">
    <source>
        <dbReference type="PROSITE-ProRule" id="PRU00867"/>
    </source>
</evidence>
<sequence>MGSPRLAALLLSQPLLFICLAVSAQVACPCLPRWTSHCLLAFRVDKHFAGLQCGWFPLLVRKSKSSHEFEVCWRHWTPSPFQRKLLGSPSLSQESHRISTHFLAISHRGLRTKRTQPSAAEGIEHLPGAGSQKHGGPEFSFDLLPEVQAIRVTIPPGPEANVRLCYQWALECEDMSSPFDTQKIVSGGHTVDLPYEFLLPCMCIEASYLQEDTVRHKKCPFRSWPEAYGSDFWKSIRFTDYSQHSQMVMALTLRCPLKLEASLCWRQDPVTPCKILPNATAKESEGWYILENVDLHPQLCFKFSFENSSHVECPHQSGSLPSWTVSMDTQAQQLILHFSTRTYATFSAAWSNPGLGLDSSMTPVYSISQTQGSVPVTLNLIIPFLRQGSCILVWRSDVQFAWKHLLCPDVSHRHLGLLILALLGLTTLLGVVLVLFCRRLLPGPGRTRPVLLLHAADSEAQRRLVGALAELLRTALGGGRDVIVDLWEGTHVARIGPLPWLWAARERVAREQGTVLLLWSCAGPSTACSGDPQTASLRTLSCAAPRQLLLAYFSRLCAKGDIPGPLRALPRYRLLRDLPRLLRALDARPATLATSWSHLGAKECLKSRLELCHLLELEAAKDDYHGSTNSPCGFSCL</sequence>
<proteinExistence type="evidence at transcript level"/>
<dbReference type="EMBL" id="BC061739">
    <property type="protein sequence ID" value="AAH61739.1"/>
    <property type="molecule type" value="mRNA"/>
</dbReference>
<dbReference type="EMBL" id="BC078742">
    <property type="protein sequence ID" value="AAH78742.1"/>
    <property type="molecule type" value="mRNA"/>
</dbReference>
<dbReference type="RefSeq" id="NP_001004091.1">
    <property type="nucleotide sequence ID" value="NM_001004091.1"/>
</dbReference>
<dbReference type="RefSeq" id="XP_017448189.1">
    <property type="nucleotide sequence ID" value="XM_017592700.3"/>
</dbReference>
<dbReference type="SMR" id="Q6AZ51"/>
<dbReference type="FunCoup" id="Q6AZ51">
    <property type="interactions" value="23"/>
</dbReference>
<dbReference type="STRING" id="10116.ENSRNOP00000053347"/>
<dbReference type="GlyCosmos" id="Q6AZ51">
    <property type="glycosylation" value="2 sites, No reported glycans"/>
</dbReference>
<dbReference type="GlyGen" id="Q6AZ51">
    <property type="glycosylation" value="3 sites"/>
</dbReference>
<dbReference type="PhosphoSitePlus" id="Q6AZ51"/>
<dbReference type="PaxDb" id="10116-ENSRNOP00000053347"/>
<dbReference type="Ensembl" id="ENSRNOT00000119312.1">
    <property type="protein sequence ID" value="ENSRNOP00000085698.1"/>
    <property type="gene ID" value="ENSRNOG00000009204.7"/>
</dbReference>
<dbReference type="GeneID" id="362417"/>
<dbReference type="KEGG" id="rno:362417"/>
<dbReference type="UCSC" id="RGD:735148">
    <property type="organism name" value="rat"/>
</dbReference>
<dbReference type="AGR" id="RGD:735148"/>
<dbReference type="CTD" id="132014"/>
<dbReference type="RGD" id="735148">
    <property type="gene designation" value="Il17re"/>
</dbReference>
<dbReference type="eggNOG" id="ENOG502QU0I">
    <property type="taxonomic scope" value="Eukaryota"/>
</dbReference>
<dbReference type="GeneTree" id="ENSGT00940000161421"/>
<dbReference type="HOGENOM" id="CLU_026094_0_0_1"/>
<dbReference type="InParanoid" id="Q6AZ51"/>
<dbReference type="OMA" id="CPDVSNR"/>
<dbReference type="OrthoDB" id="9894203at2759"/>
<dbReference type="PhylomeDB" id="Q6AZ51"/>
<dbReference type="TreeFam" id="TF335690"/>
<dbReference type="PRO" id="PR:Q6AZ51"/>
<dbReference type="Proteomes" id="UP000002494">
    <property type="component" value="Chromosome 4"/>
</dbReference>
<dbReference type="Bgee" id="ENSRNOG00000009204">
    <property type="expression patterns" value="Expressed in stomach and 16 other cell types or tissues"/>
</dbReference>
<dbReference type="GO" id="GO:0005886">
    <property type="term" value="C:plasma membrane"/>
    <property type="evidence" value="ECO:0007669"/>
    <property type="project" value="UniProtKB-SubCell"/>
</dbReference>
<dbReference type="GO" id="GO:0030368">
    <property type="term" value="F:interleukin-17 receptor activity"/>
    <property type="evidence" value="ECO:0000318"/>
    <property type="project" value="GO_Central"/>
</dbReference>
<dbReference type="GO" id="GO:0006954">
    <property type="term" value="P:inflammatory response"/>
    <property type="evidence" value="ECO:0007669"/>
    <property type="project" value="UniProtKB-KW"/>
</dbReference>
<dbReference type="FunFam" id="3.40.50.11530:FF:000006">
    <property type="entry name" value="interleukin-17 receptor E isoform X2"/>
    <property type="match status" value="1"/>
</dbReference>
<dbReference type="Gene3D" id="3.40.50.11530">
    <property type="match status" value="1"/>
</dbReference>
<dbReference type="InterPro" id="IPR039465">
    <property type="entry name" value="IL-17_rcpt-like"/>
</dbReference>
<dbReference type="InterPro" id="IPR027841">
    <property type="entry name" value="IL-17_rcpt_C/E_N"/>
</dbReference>
<dbReference type="InterPro" id="IPR013568">
    <property type="entry name" value="SEFIR_dom"/>
</dbReference>
<dbReference type="PANTHER" id="PTHR15583">
    <property type="entry name" value="INTERLEUKIN-17 RECEPTOR"/>
    <property type="match status" value="1"/>
</dbReference>
<dbReference type="PANTHER" id="PTHR15583:SF5">
    <property type="entry name" value="INTERLEUKIN-17 RECEPTOR E"/>
    <property type="match status" value="1"/>
</dbReference>
<dbReference type="Pfam" id="PF15037">
    <property type="entry name" value="IL17_R_N"/>
    <property type="match status" value="2"/>
</dbReference>
<dbReference type="Pfam" id="PF08357">
    <property type="entry name" value="SEFIR"/>
    <property type="match status" value="1"/>
</dbReference>
<dbReference type="PROSITE" id="PS51534">
    <property type="entry name" value="SEFIR"/>
    <property type="match status" value="1"/>
</dbReference>
<name>I17RE_RAT</name>
<protein>
    <recommendedName>
        <fullName>Interleukin-17 receptor E</fullName>
        <shortName>IL-17 receptor E</shortName>
        <shortName>IL-17RE</shortName>
    </recommendedName>
</protein>
<gene>
    <name type="primary">Il17re</name>
</gene>